<proteinExistence type="inferred from homology"/>
<feature type="chain" id="PRO_0000148084" description="ATP-dependent protease subunit HslV">
    <location>
        <begin position="1"/>
        <end position="193"/>
    </location>
</feature>
<feature type="active site" evidence="1">
    <location>
        <position position="12"/>
    </location>
</feature>
<feature type="binding site" evidence="1">
    <location>
        <position position="167"/>
    </location>
    <ligand>
        <name>Na(+)</name>
        <dbReference type="ChEBI" id="CHEBI:29101"/>
    </ligand>
</feature>
<feature type="binding site" evidence="1">
    <location>
        <position position="170"/>
    </location>
    <ligand>
        <name>Na(+)</name>
        <dbReference type="ChEBI" id="CHEBI:29101"/>
    </ligand>
</feature>
<feature type="binding site" evidence="1">
    <location>
        <position position="173"/>
    </location>
    <ligand>
        <name>Na(+)</name>
        <dbReference type="ChEBI" id="CHEBI:29101"/>
    </ligand>
</feature>
<sequence length="193" mass="20907">MAEHKPDIMYGTTIITVRKGGKVVMAGDGQVSLGQTIMKGNARKVRRLGKSGAVIAGFAGATADAFTLLERLETKLEQYPDQLMRACVELAKDWRTDRYLRRLEAMMLVADKKITLALTGLGDVLEPEDGIMAIGSGGNFALSAARALIDMDLDAETIARKAMNIAAKICVYTNDHFTIETLDAELSSLEKAI</sequence>
<reference key="1">
    <citation type="journal article" date="2004" name="Proc. Natl. Acad. Sci. U.S.A.">
        <title>The louse-borne human pathogen Bartonella quintana is a genomic derivative of the zoonotic agent Bartonella henselae.</title>
        <authorList>
            <person name="Alsmark U.C.M."/>
            <person name="Frank A.C."/>
            <person name="Karlberg E.O."/>
            <person name="Legault B.-A."/>
            <person name="Ardell D.H."/>
            <person name="Canbaeck B."/>
            <person name="Eriksson A.-S."/>
            <person name="Naeslund A.K."/>
            <person name="Handley S.A."/>
            <person name="Huvet M."/>
            <person name="La Scola B."/>
            <person name="Holmberg M."/>
            <person name="Andersson S.G.E."/>
        </authorList>
    </citation>
    <scope>NUCLEOTIDE SEQUENCE [LARGE SCALE GENOMIC DNA]</scope>
    <source>
        <strain>ATCC 49882 / DSM 28221 / CCUG 30454 / Houston 1</strain>
    </source>
</reference>
<protein>
    <recommendedName>
        <fullName evidence="1">ATP-dependent protease subunit HslV</fullName>
        <ecNumber evidence="1">3.4.25.2</ecNumber>
    </recommendedName>
</protein>
<comment type="function">
    <text evidence="1">Protease subunit of a proteasome-like degradation complex believed to be a general protein degrading machinery.</text>
</comment>
<comment type="catalytic activity">
    <reaction evidence="1">
        <text>ATP-dependent cleavage of peptide bonds with broad specificity.</text>
        <dbReference type="EC" id="3.4.25.2"/>
    </reaction>
</comment>
<comment type="activity regulation">
    <text evidence="1">Allosterically activated by HslU binding.</text>
</comment>
<comment type="subunit">
    <text evidence="1">A double ring-shaped homohexamer of HslV is capped on each side by a ring-shaped HslU homohexamer. The assembly of the HslU/HslV complex is dependent on binding of ATP.</text>
</comment>
<comment type="subcellular location">
    <subcellularLocation>
        <location evidence="1">Cytoplasm</location>
    </subcellularLocation>
</comment>
<comment type="similarity">
    <text evidence="1">Belongs to the peptidase T1B family. HslV subfamily.</text>
</comment>
<evidence type="ECO:0000255" key="1">
    <source>
        <dbReference type="HAMAP-Rule" id="MF_00248"/>
    </source>
</evidence>
<name>HSLV_BARHE</name>
<organism>
    <name type="scientific">Bartonella henselae (strain ATCC 49882 / DSM 28221 / CCUG 30454 / Houston 1)</name>
    <name type="common">Rochalimaea henselae</name>
    <dbReference type="NCBI Taxonomy" id="283166"/>
    <lineage>
        <taxon>Bacteria</taxon>
        <taxon>Pseudomonadati</taxon>
        <taxon>Pseudomonadota</taxon>
        <taxon>Alphaproteobacteria</taxon>
        <taxon>Hyphomicrobiales</taxon>
        <taxon>Bartonellaceae</taxon>
        <taxon>Bartonella</taxon>
    </lineage>
</organism>
<accession>Q6G5G1</accession>
<dbReference type="EC" id="3.4.25.2" evidence="1"/>
<dbReference type="EMBL" id="BX897699">
    <property type="protein sequence ID" value="CAF27019.1"/>
    <property type="molecule type" value="Genomic_DNA"/>
</dbReference>
<dbReference type="RefSeq" id="WP_011180158.1">
    <property type="nucleotide sequence ID" value="NZ_LRIJ02000001.1"/>
</dbReference>
<dbReference type="SMR" id="Q6G5G1"/>
<dbReference type="MEROPS" id="T01.006"/>
<dbReference type="PaxDb" id="283166-BH02070"/>
<dbReference type="EnsemblBacteria" id="CAF27019">
    <property type="protein sequence ID" value="CAF27019"/>
    <property type="gene ID" value="BH02070"/>
</dbReference>
<dbReference type="GeneID" id="92984874"/>
<dbReference type="KEGG" id="bhe:BH02070"/>
<dbReference type="eggNOG" id="COG5405">
    <property type="taxonomic scope" value="Bacteria"/>
</dbReference>
<dbReference type="OrthoDB" id="9804884at2"/>
<dbReference type="Proteomes" id="UP000000421">
    <property type="component" value="Chromosome"/>
</dbReference>
<dbReference type="GO" id="GO:0009376">
    <property type="term" value="C:HslUV protease complex"/>
    <property type="evidence" value="ECO:0007669"/>
    <property type="project" value="UniProtKB-UniRule"/>
</dbReference>
<dbReference type="GO" id="GO:0005839">
    <property type="term" value="C:proteasome core complex"/>
    <property type="evidence" value="ECO:0007669"/>
    <property type="project" value="InterPro"/>
</dbReference>
<dbReference type="GO" id="GO:0046872">
    <property type="term" value="F:metal ion binding"/>
    <property type="evidence" value="ECO:0007669"/>
    <property type="project" value="UniProtKB-KW"/>
</dbReference>
<dbReference type="GO" id="GO:0004298">
    <property type="term" value="F:threonine-type endopeptidase activity"/>
    <property type="evidence" value="ECO:0007669"/>
    <property type="project" value="UniProtKB-KW"/>
</dbReference>
<dbReference type="GO" id="GO:0051603">
    <property type="term" value="P:proteolysis involved in protein catabolic process"/>
    <property type="evidence" value="ECO:0007669"/>
    <property type="project" value="InterPro"/>
</dbReference>
<dbReference type="CDD" id="cd01913">
    <property type="entry name" value="protease_HslV"/>
    <property type="match status" value="1"/>
</dbReference>
<dbReference type="Gene3D" id="3.60.20.10">
    <property type="entry name" value="Glutamine Phosphoribosylpyrophosphate, subunit 1, domain 1"/>
    <property type="match status" value="1"/>
</dbReference>
<dbReference type="HAMAP" id="MF_00248">
    <property type="entry name" value="HslV"/>
    <property type="match status" value="1"/>
</dbReference>
<dbReference type="InterPro" id="IPR022281">
    <property type="entry name" value="ATP-dep_Prtase_HsIV_su"/>
</dbReference>
<dbReference type="InterPro" id="IPR029055">
    <property type="entry name" value="Ntn_hydrolases_N"/>
</dbReference>
<dbReference type="InterPro" id="IPR001353">
    <property type="entry name" value="Proteasome_sua/b"/>
</dbReference>
<dbReference type="InterPro" id="IPR023333">
    <property type="entry name" value="Proteasome_suB-type"/>
</dbReference>
<dbReference type="NCBIfam" id="TIGR03692">
    <property type="entry name" value="ATP_dep_HslV"/>
    <property type="match status" value="1"/>
</dbReference>
<dbReference type="NCBIfam" id="NF003964">
    <property type="entry name" value="PRK05456.1"/>
    <property type="match status" value="1"/>
</dbReference>
<dbReference type="PANTHER" id="PTHR32194:SF7">
    <property type="entry name" value="ATP-DEPENDENT PROTEASE SUBUNIT HSLV"/>
    <property type="match status" value="1"/>
</dbReference>
<dbReference type="PANTHER" id="PTHR32194">
    <property type="entry name" value="METALLOPROTEASE TLDD"/>
    <property type="match status" value="1"/>
</dbReference>
<dbReference type="Pfam" id="PF00227">
    <property type="entry name" value="Proteasome"/>
    <property type="match status" value="1"/>
</dbReference>
<dbReference type="PIRSF" id="PIRSF039093">
    <property type="entry name" value="HslV"/>
    <property type="match status" value="1"/>
</dbReference>
<dbReference type="SUPFAM" id="SSF56235">
    <property type="entry name" value="N-terminal nucleophile aminohydrolases (Ntn hydrolases)"/>
    <property type="match status" value="1"/>
</dbReference>
<dbReference type="PROSITE" id="PS51476">
    <property type="entry name" value="PROTEASOME_BETA_2"/>
    <property type="match status" value="1"/>
</dbReference>
<keyword id="KW-0021">Allosteric enzyme</keyword>
<keyword id="KW-0963">Cytoplasm</keyword>
<keyword id="KW-0378">Hydrolase</keyword>
<keyword id="KW-0479">Metal-binding</keyword>
<keyword id="KW-0645">Protease</keyword>
<keyword id="KW-0915">Sodium</keyword>
<keyword id="KW-0888">Threonine protease</keyword>
<gene>
    <name evidence="1" type="primary">hslV</name>
    <name type="ordered locus">BH02070</name>
</gene>